<evidence type="ECO:0000255" key="1">
    <source>
        <dbReference type="HAMAP-Rule" id="MF_01325"/>
    </source>
</evidence>
<evidence type="ECO:0000256" key="2">
    <source>
        <dbReference type="SAM" id="MobiDB-lite"/>
    </source>
</evidence>
<evidence type="ECO:0000305" key="3"/>
<keyword id="KW-0488">Methylation</keyword>
<keyword id="KW-1185">Reference proteome</keyword>
<keyword id="KW-0687">Ribonucleoprotein</keyword>
<keyword id="KW-0689">Ribosomal protein</keyword>
<keyword id="KW-0694">RNA-binding</keyword>
<keyword id="KW-0699">rRNA-binding</keyword>
<sequence>MAIGLVGKKCGMTRVFTEAGASIPVTVVEISANRITQVKNTDVDGYQAIQVTTGTRRDSRVTAAQKGHFAKAGVAAGRGVWEFRANDSDLEGREIGGEILADLFEQGQMVDVTGSSKGKGFQGPVKRHNFSMQDATHGNSVSHRAHGSTGQNQSPGKVFKGKKMAGQMGNKRVTVQGLEVISVDAEKGLLVIKGAIPGATGGDVIVRPSVKA</sequence>
<feature type="chain" id="PRO_0000241393" description="Large ribosomal subunit protein uL3">
    <location>
        <begin position="1"/>
        <end position="212"/>
    </location>
</feature>
<feature type="region of interest" description="Disordered" evidence="2">
    <location>
        <begin position="135"/>
        <end position="162"/>
    </location>
</feature>
<feature type="compositionally biased region" description="Polar residues" evidence="2">
    <location>
        <begin position="135"/>
        <end position="155"/>
    </location>
</feature>
<feature type="modified residue" description="N5-methylglutamine" evidence="1">
    <location>
        <position position="153"/>
    </location>
</feature>
<protein>
    <recommendedName>
        <fullName evidence="1">Large ribosomal subunit protein uL3</fullName>
    </recommendedName>
    <alternativeName>
        <fullName evidence="3">50S ribosomal protein L3</fullName>
    </alternativeName>
</protein>
<proteinExistence type="inferred from homology"/>
<comment type="function">
    <text evidence="1">One of the primary rRNA binding proteins, it binds directly near the 3'-end of the 23S rRNA, where it nucleates assembly of the 50S subunit.</text>
</comment>
<comment type="subunit">
    <text evidence="1">Part of the 50S ribosomal subunit. Forms a cluster with proteins L14 and L19.</text>
</comment>
<comment type="PTM">
    <text evidence="1">Methylated by PrmB.</text>
</comment>
<comment type="similarity">
    <text evidence="1">Belongs to the universal ribosomal protein uL3 family.</text>
</comment>
<name>RL3_PSYA2</name>
<reference key="1">
    <citation type="journal article" date="2010" name="Appl. Environ. Microbiol.">
        <title>The genome sequence of Psychrobacter arcticus 273-4, a psychroactive Siberian permafrost bacterium, reveals mechanisms for adaptation to low-temperature growth.</title>
        <authorList>
            <person name="Ayala-del-Rio H.L."/>
            <person name="Chain P.S."/>
            <person name="Grzymski J.J."/>
            <person name="Ponder M.A."/>
            <person name="Ivanova N."/>
            <person name="Bergholz P.W."/>
            <person name="Di Bartolo G."/>
            <person name="Hauser L."/>
            <person name="Land M."/>
            <person name="Bakermans C."/>
            <person name="Rodrigues D."/>
            <person name="Klappenbach J."/>
            <person name="Zarka D."/>
            <person name="Larimer F."/>
            <person name="Richardson P."/>
            <person name="Murray A."/>
            <person name="Thomashow M."/>
            <person name="Tiedje J.M."/>
        </authorList>
    </citation>
    <scope>NUCLEOTIDE SEQUENCE [LARGE SCALE GENOMIC DNA]</scope>
    <source>
        <strain>DSM 17307 / VKM B-2377 / 273-4</strain>
    </source>
</reference>
<accession>Q4FUF6</accession>
<dbReference type="EMBL" id="CP000082">
    <property type="protein sequence ID" value="AAZ18352.1"/>
    <property type="molecule type" value="Genomic_DNA"/>
</dbReference>
<dbReference type="RefSeq" id="WP_011279787.1">
    <property type="nucleotide sequence ID" value="NC_007204.1"/>
</dbReference>
<dbReference type="SMR" id="Q4FUF6"/>
<dbReference type="STRING" id="259536.Psyc_0489"/>
<dbReference type="KEGG" id="par:Psyc_0489"/>
<dbReference type="eggNOG" id="COG0087">
    <property type="taxonomic scope" value="Bacteria"/>
</dbReference>
<dbReference type="HOGENOM" id="CLU_044142_4_1_6"/>
<dbReference type="OrthoDB" id="9806135at2"/>
<dbReference type="Proteomes" id="UP000000546">
    <property type="component" value="Chromosome"/>
</dbReference>
<dbReference type="GO" id="GO:0022625">
    <property type="term" value="C:cytosolic large ribosomal subunit"/>
    <property type="evidence" value="ECO:0007669"/>
    <property type="project" value="TreeGrafter"/>
</dbReference>
<dbReference type="GO" id="GO:0019843">
    <property type="term" value="F:rRNA binding"/>
    <property type="evidence" value="ECO:0007669"/>
    <property type="project" value="UniProtKB-UniRule"/>
</dbReference>
<dbReference type="GO" id="GO:0003735">
    <property type="term" value="F:structural constituent of ribosome"/>
    <property type="evidence" value="ECO:0007669"/>
    <property type="project" value="InterPro"/>
</dbReference>
<dbReference type="GO" id="GO:0006412">
    <property type="term" value="P:translation"/>
    <property type="evidence" value="ECO:0007669"/>
    <property type="project" value="UniProtKB-UniRule"/>
</dbReference>
<dbReference type="FunFam" id="2.40.30.10:FF:000004">
    <property type="entry name" value="50S ribosomal protein L3"/>
    <property type="match status" value="1"/>
</dbReference>
<dbReference type="FunFam" id="3.30.160.810:FF:000001">
    <property type="entry name" value="50S ribosomal protein L3"/>
    <property type="match status" value="1"/>
</dbReference>
<dbReference type="Gene3D" id="3.30.160.810">
    <property type="match status" value="1"/>
</dbReference>
<dbReference type="Gene3D" id="2.40.30.10">
    <property type="entry name" value="Translation factors"/>
    <property type="match status" value="1"/>
</dbReference>
<dbReference type="HAMAP" id="MF_01325_B">
    <property type="entry name" value="Ribosomal_uL3_B"/>
    <property type="match status" value="1"/>
</dbReference>
<dbReference type="InterPro" id="IPR000597">
    <property type="entry name" value="Ribosomal_uL3"/>
</dbReference>
<dbReference type="InterPro" id="IPR019927">
    <property type="entry name" value="Ribosomal_uL3_bac/org-type"/>
</dbReference>
<dbReference type="InterPro" id="IPR019926">
    <property type="entry name" value="Ribosomal_uL3_CS"/>
</dbReference>
<dbReference type="InterPro" id="IPR009000">
    <property type="entry name" value="Transl_B-barrel_sf"/>
</dbReference>
<dbReference type="NCBIfam" id="TIGR03625">
    <property type="entry name" value="L3_bact"/>
    <property type="match status" value="1"/>
</dbReference>
<dbReference type="PANTHER" id="PTHR11229">
    <property type="entry name" value="50S RIBOSOMAL PROTEIN L3"/>
    <property type="match status" value="1"/>
</dbReference>
<dbReference type="PANTHER" id="PTHR11229:SF16">
    <property type="entry name" value="LARGE RIBOSOMAL SUBUNIT PROTEIN UL3C"/>
    <property type="match status" value="1"/>
</dbReference>
<dbReference type="Pfam" id="PF00297">
    <property type="entry name" value="Ribosomal_L3"/>
    <property type="match status" value="1"/>
</dbReference>
<dbReference type="SUPFAM" id="SSF50447">
    <property type="entry name" value="Translation proteins"/>
    <property type="match status" value="1"/>
</dbReference>
<dbReference type="PROSITE" id="PS00474">
    <property type="entry name" value="RIBOSOMAL_L3"/>
    <property type="match status" value="1"/>
</dbReference>
<organism>
    <name type="scientific">Psychrobacter arcticus (strain DSM 17307 / VKM B-2377 / 273-4)</name>
    <dbReference type="NCBI Taxonomy" id="259536"/>
    <lineage>
        <taxon>Bacteria</taxon>
        <taxon>Pseudomonadati</taxon>
        <taxon>Pseudomonadota</taxon>
        <taxon>Gammaproteobacteria</taxon>
        <taxon>Moraxellales</taxon>
        <taxon>Moraxellaceae</taxon>
        <taxon>Psychrobacter</taxon>
    </lineage>
</organism>
<gene>
    <name evidence="1" type="primary">rplC</name>
    <name type="ordered locus">Psyc_0489</name>
</gene>